<name>KAD_MESFL</name>
<organism>
    <name type="scientific">Mesoplasma florum (strain ATCC 33453 / NBRC 100688 / NCTC 11704 / L1)</name>
    <name type="common">Acholeplasma florum</name>
    <dbReference type="NCBI Taxonomy" id="265311"/>
    <lineage>
        <taxon>Bacteria</taxon>
        <taxon>Bacillati</taxon>
        <taxon>Mycoplasmatota</taxon>
        <taxon>Mollicutes</taxon>
        <taxon>Entomoplasmatales</taxon>
        <taxon>Entomoplasmataceae</taxon>
        <taxon>Mesoplasma</taxon>
    </lineage>
</organism>
<gene>
    <name evidence="1" type="primary">adk</name>
    <name type="ordered locus">Mfl144</name>
</gene>
<accession>Q6F1X3</accession>
<dbReference type="EC" id="2.7.4.3" evidence="1"/>
<dbReference type="EMBL" id="AE017263">
    <property type="protein sequence ID" value="AAT75500.1"/>
    <property type="molecule type" value="Genomic_DNA"/>
</dbReference>
<dbReference type="RefSeq" id="WP_011183041.1">
    <property type="nucleotide sequence ID" value="NC_006055.1"/>
</dbReference>
<dbReference type="RefSeq" id="YP_053384.1">
    <property type="nucleotide sequence ID" value="NC_006055.1"/>
</dbReference>
<dbReference type="SMR" id="Q6F1X3"/>
<dbReference type="STRING" id="265311.Mfl144"/>
<dbReference type="PaxDb" id="265311-Mfl144"/>
<dbReference type="EnsemblBacteria" id="AAT75500">
    <property type="protein sequence ID" value="AAT75500"/>
    <property type="gene ID" value="Mfl144"/>
</dbReference>
<dbReference type="GeneID" id="2897839"/>
<dbReference type="KEGG" id="mfl:Mfl144"/>
<dbReference type="PATRIC" id="fig|265311.5.peg.145"/>
<dbReference type="eggNOG" id="COG0563">
    <property type="taxonomic scope" value="Bacteria"/>
</dbReference>
<dbReference type="HOGENOM" id="CLU_032354_1_2_14"/>
<dbReference type="OrthoDB" id="9805030at2"/>
<dbReference type="UniPathway" id="UPA00588">
    <property type="reaction ID" value="UER00649"/>
</dbReference>
<dbReference type="Proteomes" id="UP000006647">
    <property type="component" value="Chromosome"/>
</dbReference>
<dbReference type="GO" id="GO:0005737">
    <property type="term" value="C:cytoplasm"/>
    <property type="evidence" value="ECO:0007669"/>
    <property type="project" value="UniProtKB-SubCell"/>
</dbReference>
<dbReference type="GO" id="GO:0004017">
    <property type="term" value="F:adenylate kinase activity"/>
    <property type="evidence" value="ECO:0007669"/>
    <property type="project" value="UniProtKB-UniRule"/>
</dbReference>
<dbReference type="GO" id="GO:0005524">
    <property type="term" value="F:ATP binding"/>
    <property type="evidence" value="ECO:0007669"/>
    <property type="project" value="UniProtKB-UniRule"/>
</dbReference>
<dbReference type="GO" id="GO:0008270">
    <property type="term" value="F:zinc ion binding"/>
    <property type="evidence" value="ECO:0007669"/>
    <property type="project" value="UniProtKB-UniRule"/>
</dbReference>
<dbReference type="GO" id="GO:0044209">
    <property type="term" value="P:AMP salvage"/>
    <property type="evidence" value="ECO:0007669"/>
    <property type="project" value="UniProtKB-UniRule"/>
</dbReference>
<dbReference type="CDD" id="cd01428">
    <property type="entry name" value="ADK"/>
    <property type="match status" value="1"/>
</dbReference>
<dbReference type="FunFam" id="3.40.50.300:FF:000106">
    <property type="entry name" value="Adenylate kinase mitochondrial"/>
    <property type="match status" value="1"/>
</dbReference>
<dbReference type="Gene3D" id="3.40.50.300">
    <property type="entry name" value="P-loop containing nucleotide triphosphate hydrolases"/>
    <property type="match status" value="1"/>
</dbReference>
<dbReference type="HAMAP" id="MF_00235">
    <property type="entry name" value="Adenylate_kinase_Adk"/>
    <property type="match status" value="1"/>
</dbReference>
<dbReference type="InterPro" id="IPR006259">
    <property type="entry name" value="Adenyl_kin_sub"/>
</dbReference>
<dbReference type="InterPro" id="IPR000850">
    <property type="entry name" value="Adenylat/UMP-CMP_kin"/>
</dbReference>
<dbReference type="InterPro" id="IPR033690">
    <property type="entry name" value="Adenylat_kinase_CS"/>
</dbReference>
<dbReference type="InterPro" id="IPR007862">
    <property type="entry name" value="Adenylate_kinase_lid-dom"/>
</dbReference>
<dbReference type="InterPro" id="IPR036193">
    <property type="entry name" value="ADK_active_lid_dom_sf"/>
</dbReference>
<dbReference type="InterPro" id="IPR027417">
    <property type="entry name" value="P-loop_NTPase"/>
</dbReference>
<dbReference type="NCBIfam" id="TIGR01351">
    <property type="entry name" value="adk"/>
    <property type="match status" value="1"/>
</dbReference>
<dbReference type="PANTHER" id="PTHR23359">
    <property type="entry name" value="NUCLEOTIDE KINASE"/>
    <property type="match status" value="1"/>
</dbReference>
<dbReference type="Pfam" id="PF00406">
    <property type="entry name" value="ADK"/>
    <property type="match status" value="1"/>
</dbReference>
<dbReference type="Pfam" id="PF05191">
    <property type="entry name" value="ADK_lid"/>
    <property type="match status" value="1"/>
</dbReference>
<dbReference type="PRINTS" id="PR00094">
    <property type="entry name" value="ADENYLTKNASE"/>
</dbReference>
<dbReference type="SUPFAM" id="SSF57774">
    <property type="entry name" value="Microbial and mitochondrial ADK, insert 'zinc finger' domain"/>
    <property type="match status" value="1"/>
</dbReference>
<dbReference type="SUPFAM" id="SSF52540">
    <property type="entry name" value="P-loop containing nucleoside triphosphate hydrolases"/>
    <property type="match status" value="1"/>
</dbReference>
<dbReference type="PROSITE" id="PS00113">
    <property type="entry name" value="ADENYLATE_KINASE"/>
    <property type="match status" value="1"/>
</dbReference>
<protein>
    <recommendedName>
        <fullName evidence="1">Adenylate kinase</fullName>
        <shortName evidence="1">AK</shortName>
        <ecNumber evidence="1">2.7.4.3</ecNumber>
    </recommendedName>
    <alternativeName>
        <fullName evidence="1">ATP-AMP transphosphorylase</fullName>
    </alternativeName>
    <alternativeName>
        <fullName evidence="1">ATP:AMP phosphotransferase</fullName>
    </alternativeName>
    <alternativeName>
        <fullName evidence="1">Adenylate monophosphate kinase</fullName>
    </alternativeName>
</protein>
<reference key="1">
    <citation type="submission" date="2004-06" db="EMBL/GenBank/DDBJ databases">
        <authorList>
            <person name="Birren B.W."/>
            <person name="Stange-Thomann N."/>
            <person name="Hafez N."/>
            <person name="DeCaprio D."/>
            <person name="Fisher S."/>
            <person name="Butler J."/>
            <person name="Elkins T."/>
            <person name="Kodira C.D."/>
            <person name="Major J."/>
            <person name="Wang S."/>
            <person name="Nicol R."/>
            <person name="Nusbaum C."/>
        </authorList>
    </citation>
    <scope>NUCLEOTIDE SEQUENCE [LARGE SCALE GENOMIC DNA]</scope>
    <source>
        <strain>ATCC 33453 / NBRC 100688 / NCTC 11704 / L1</strain>
    </source>
</reference>
<keyword id="KW-0067">ATP-binding</keyword>
<keyword id="KW-0963">Cytoplasm</keyword>
<keyword id="KW-0418">Kinase</keyword>
<keyword id="KW-0479">Metal-binding</keyword>
<keyword id="KW-0545">Nucleotide biosynthesis</keyword>
<keyword id="KW-0547">Nucleotide-binding</keyword>
<keyword id="KW-1185">Reference proteome</keyword>
<keyword id="KW-0808">Transferase</keyword>
<keyword id="KW-0862">Zinc</keyword>
<comment type="function">
    <text evidence="1">Catalyzes the reversible transfer of the terminal phosphate group between ATP and AMP. Plays an important role in cellular energy homeostasis and in adenine nucleotide metabolism.</text>
</comment>
<comment type="catalytic activity">
    <reaction evidence="1">
        <text>AMP + ATP = 2 ADP</text>
        <dbReference type="Rhea" id="RHEA:12973"/>
        <dbReference type="ChEBI" id="CHEBI:30616"/>
        <dbReference type="ChEBI" id="CHEBI:456215"/>
        <dbReference type="ChEBI" id="CHEBI:456216"/>
        <dbReference type="EC" id="2.7.4.3"/>
    </reaction>
</comment>
<comment type="pathway">
    <text evidence="1">Purine metabolism; AMP biosynthesis via salvage pathway; AMP from ADP: step 1/1.</text>
</comment>
<comment type="subunit">
    <text evidence="1">Monomer.</text>
</comment>
<comment type="subcellular location">
    <subcellularLocation>
        <location evidence="1">Cytoplasm</location>
    </subcellularLocation>
</comment>
<comment type="domain">
    <text evidence="1">Consists of three domains, a large central CORE domain and two small peripheral domains, NMPbind and LID, which undergo movements during catalysis. The LID domain closes over the site of phosphoryl transfer upon ATP binding. Assembling and dissambling the active center during each catalytic cycle provides an effective means to prevent ATP hydrolysis. Some bacteria have evolved a zinc-coordinating structure that stabilizes the LID domain.</text>
</comment>
<comment type="similarity">
    <text evidence="1">Belongs to the adenylate kinase family.</text>
</comment>
<sequence>MNIMLLGAPGSGKGTLAEKLIKNQGFNQMSTGDLMRKEINDETPLGIECARYMNEGRLVPDEVTMGIVKNFLQDNHNQLIFDGIPRTLNQAKILEENLIELNAKIDKVIYIDVPSEILLNRISGRLICPKCKVSYHIISRKPKLEGICDNDGTELVRRPDDAPEKVKVRLEAYANETAPLVDYYKNKPGFIHIVDNANTTAEEVYAEVLGAL</sequence>
<feature type="chain" id="PRO_0000158791" description="Adenylate kinase">
    <location>
        <begin position="1"/>
        <end position="212"/>
    </location>
</feature>
<feature type="region of interest" description="NMP" evidence="1">
    <location>
        <begin position="30"/>
        <end position="59"/>
    </location>
</feature>
<feature type="region of interest" description="LID" evidence="1">
    <location>
        <begin position="124"/>
        <end position="161"/>
    </location>
</feature>
<feature type="binding site" evidence="1">
    <location>
        <begin position="10"/>
        <end position="15"/>
    </location>
    <ligand>
        <name>ATP</name>
        <dbReference type="ChEBI" id="CHEBI:30616"/>
    </ligand>
</feature>
<feature type="binding site" evidence="1">
    <location>
        <position position="31"/>
    </location>
    <ligand>
        <name>AMP</name>
        <dbReference type="ChEBI" id="CHEBI:456215"/>
    </ligand>
</feature>
<feature type="binding site" evidence="1">
    <location>
        <position position="36"/>
    </location>
    <ligand>
        <name>AMP</name>
        <dbReference type="ChEBI" id="CHEBI:456215"/>
    </ligand>
</feature>
<feature type="binding site" evidence="1">
    <location>
        <begin position="57"/>
        <end position="59"/>
    </location>
    <ligand>
        <name>AMP</name>
        <dbReference type="ChEBI" id="CHEBI:456215"/>
    </ligand>
</feature>
<feature type="binding site" evidence="1">
    <location>
        <position position="90"/>
    </location>
    <ligand>
        <name>AMP</name>
        <dbReference type="ChEBI" id="CHEBI:456215"/>
    </ligand>
</feature>
<feature type="binding site" evidence="1">
    <location>
        <position position="125"/>
    </location>
    <ligand>
        <name>ATP</name>
        <dbReference type="ChEBI" id="CHEBI:30616"/>
    </ligand>
</feature>
<feature type="binding site" evidence="1">
    <location>
        <position position="128"/>
    </location>
    <ligand>
        <name>Zn(2+)</name>
        <dbReference type="ChEBI" id="CHEBI:29105"/>
        <note>structural</note>
    </ligand>
</feature>
<feature type="binding site" evidence="1">
    <location>
        <position position="131"/>
    </location>
    <ligand>
        <name>Zn(2+)</name>
        <dbReference type="ChEBI" id="CHEBI:29105"/>
        <note>structural</note>
    </ligand>
</feature>
<feature type="binding site" evidence="1">
    <location>
        <begin position="134"/>
        <end position="135"/>
    </location>
    <ligand>
        <name>ATP</name>
        <dbReference type="ChEBI" id="CHEBI:30616"/>
    </ligand>
</feature>
<feature type="binding site" evidence="1">
    <location>
        <position position="148"/>
    </location>
    <ligand>
        <name>Zn(2+)</name>
        <dbReference type="ChEBI" id="CHEBI:29105"/>
        <note>structural</note>
    </ligand>
</feature>
<feature type="binding site" evidence="1">
    <location>
        <position position="151"/>
    </location>
    <ligand>
        <name>Zn(2+)</name>
        <dbReference type="ChEBI" id="CHEBI:29105"/>
        <note>structural</note>
    </ligand>
</feature>
<feature type="binding site" evidence="1">
    <location>
        <position position="158"/>
    </location>
    <ligand>
        <name>AMP</name>
        <dbReference type="ChEBI" id="CHEBI:456215"/>
    </ligand>
</feature>
<feature type="binding site" evidence="1">
    <location>
        <position position="169"/>
    </location>
    <ligand>
        <name>AMP</name>
        <dbReference type="ChEBI" id="CHEBI:456215"/>
    </ligand>
</feature>
<feature type="binding site" evidence="1">
    <location>
        <position position="198"/>
    </location>
    <ligand>
        <name>ATP</name>
        <dbReference type="ChEBI" id="CHEBI:30616"/>
    </ligand>
</feature>
<proteinExistence type="inferred from homology"/>
<evidence type="ECO:0000255" key="1">
    <source>
        <dbReference type="HAMAP-Rule" id="MF_00235"/>
    </source>
</evidence>